<reference key="1">
    <citation type="submission" date="2006-06" db="EMBL/GenBank/DDBJ databases">
        <title>Complete sequence of Pseudoalteromonas atlantica T6c.</title>
        <authorList>
            <consortium name="US DOE Joint Genome Institute"/>
            <person name="Copeland A."/>
            <person name="Lucas S."/>
            <person name="Lapidus A."/>
            <person name="Barry K."/>
            <person name="Detter J.C."/>
            <person name="Glavina del Rio T."/>
            <person name="Hammon N."/>
            <person name="Israni S."/>
            <person name="Dalin E."/>
            <person name="Tice H."/>
            <person name="Pitluck S."/>
            <person name="Saunders E."/>
            <person name="Brettin T."/>
            <person name="Bruce D."/>
            <person name="Han C."/>
            <person name="Tapia R."/>
            <person name="Gilna P."/>
            <person name="Schmutz J."/>
            <person name="Larimer F."/>
            <person name="Land M."/>
            <person name="Hauser L."/>
            <person name="Kyrpides N."/>
            <person name="Kim E."/>
            <person name="Karls A.C."/>
            <person name="Bartlett D."/>
            <person name="Higgins B.P."/>
            <person name="Richardson P."/>
        </authorList>
    </citation>
    <scope>NUCLEOTIDE SEQUENCE [LARGE SCALE GENOMIC DNA]</scope>
    <source>
        <strain>T6c / ATCC BAA-1087</strain>
    </source>
</reference>
<dbReference type="EC" id="5.4.2.10" evidence="1"/>
<dbReference type="EMBL" id="CP000388">
    <property type="protein sequence ID" value="ABG40095.1"/>
    <property type="molecule type" value="Genomic_DNA"/>
</dbReference>
<dbReference type="RefSeq" id="WP_011574409.1">
    <property type="nucleotide sequence ID" value="NC_008228.1"/>
</dbReference>
<dbReference type="SMR" id="Q15VJ3"/>
<dbReference type="STRING" id="342610.Patl_1573"/>
<dbReference type="KEGG" id="pat:Patl_1573"/>
<dbReference type="eggNOG" id="COG1109">
    <property type="taxonomic scope" value="Bacteria"/>
</dbReference>
<dbReference type="HOGENOM" id="CLU_016950_7_0_6"/>
<dbReference type="OrthoDB" id="9803322at2"/>
<dbReference type="Proteomes" id="UP000001981">
    <property type="component" value="Chromosome"/>
</dbReference>
<dbReference type="GO" id="GO:0005829">
    <property type="term" value="C:cytosol"/>
    <property type="evidence" value="ECO:0007669"/>
    <property type="project" value="TreeGrafter"/>
</dbReference>
<dbReference type="GO" id="GO:0000287">
    <property type="term" value="F:magnesium ion binding"/>
    <property type="evidence" value="ECO:0007669"/>
    <property type="project" value="UniProtKB-UniRule"/>
</dbReference>
<dbReference type="GO" id="GO:0008966">
    <property type="term" value="F:phosphoglucosamine mutase activity"/>
    <property type="evidence" value="ECO:0007669"/>
    <property type="project" value="UniProtKB-UniRule"/>
</dbReference>
<dbReference type="GO" id="GO:0004615">
    <property type="term" value="F:phosphomannomutase activity"/>
    <property type="evidence" value="ECO:0007669"/>
    <property type="project" value="TreeGrafter"/>
</dbReference>
<dbReference type="GO" id="GO:0005975">
    <property type="term" value="P:carbohydrate metabolic process"/>
    <property type="evidence" value="ECO:0007669"/>
    <property type="project" value="InterPro"/>
</dbReference>
<dbReference type="GO" id="GO:0009252">
    <property type="term" value="P:peptidoglycan biosynthetic process"/>
    <property type="evidence" value="ECO:0007669"/>
    <property type="project" value="TreeGrafter"/>
</dbReference>
<dbReference type="GO" id="GO:0006048">
    <property type="term" value="P:UDP-N-acetylglucosamine biosynthetic process"/>
    <property type="evidence" value="ECO:0007669"/>
    <property type="project" value="TreeGrafter"/>
</dbReference>
<dbReference type="CDD" id="cd05802">
    <property type="entry name" value="GlmM"/>
    <property type="match status" value="1"/>
</dbReference>
<dbReference type="FunFam" id="3.30.310.50:FF:000001">
    <property type="entry name" value="Phosphoglucosamine mutase"/>
    <property type="match status" value="1"/>
</dbReference>
<dbReference type="FunFam" id="3.40.120.10:FF:000001">
    <property type="entry name" value="Phosphoglucosamine mutase"/>
    <property type="match status" value="1"/>
</dbReference>
<dbReference type="FunFam" id="3.40.120.10:FF:000003">
    <property type="entry name" value="Phosphoglucosamine mutase"/>
    <property type="match status" value="1"/>
</dbReference>
<dbReference type="Gene3D" id="3.40.120.10">
    <property type="entry name" value="Alpha-D-Glucose-1,6-Bisphosphate, subunit A, domain 3"/>
    <property type="match status" value="3"/>
</dbReference>
<dbReference type="Gene3D" id="3.30.310.50">
    <property type="entry name" value="Alpha-D-phosphohexomutase, C-terminal domain"/>
    <property type="match status" value="1"/>
</dbReference>
<dbReference type="HAMAP" id="MF_01554_B">
    <property type="entry name" value="GlmM_B"/>
    <property type="match status" value="1"/>
</dbReference>
<dbReference type="InterPro" id="IPR005844">
    <property type="entry name" value="A-D-PHexomutase_a/b/a-I"/>
</dbReference>
<dbReference type="InterPro" id="IPR016055">
    <property type="entry name" value="A-D-PHexomutase_a/b/a-I/II/III"/>
</dbReference>
<dbReference type="InterPro" id="IPR005845">
    <property type="entry name" value="A-D-PHexomutase_a/b/a-II"/>
</dbReference>
<dbReference type="InterPro" id="IPR005846">
    <property type="entry name" value="A-D-PHexomutase_a/b/a-III"/>
</dbReference>
<dbReference type="InterPro" id="IPR005843">
    <property type="entry name" value="A-D-PHexomutase_C"/>
</dbReference>
<dbReference type="InterPro" id="IPR036900">
    <property type="entry name" value="A-D-PHexomutase_C_sf"/>
</dbReference>
<dbReference type="InterPro" id="IPR016066">
    <property type="entry name" value="A-D-PHexomutase_CS"/>
</dbReference>
<dbReference type="InterPro" id="IPR005841">
    <property type="entry name" value="Alpha-D-phosphohexomutase_SF"/>
</dbReference>
<dbReference type="InterPro" id="IPR006352">
    <property type="entry name" value="GlmM_bact"/>
</dbReference>
<dbReference type="InterPro" id="IPR050060">
    <property type="entry name" value="Phosphoglucosamine_mutase"/>
</dbReference>
<dbReference type="NCBIfam" id="TIGR01455">
    <property type="entry name" value="glmM"/>
    <property type="match status" value="1"/>
</dbReference>
<dbReference type="NCBIfam" id="NF008139">
    <property type="entry name" value="PRK10887.1"/>
    <property type="match status" value="1"/>
</dbReference>
<dbReference type="PANTHER" id="PTHR42946:SF1">
    <property type="entry name" value="PHOSPHOGLUCOMUTASE (ALPHA-D-GLUCOSE-1,6-BISPHOSPHATE-DEPENDENT)"/>
    <property type="match status" value="1"/>
</dbReference>
<dbReference type="PANTHER" id="PTHR42946">
    <property type="entry name" value="PHOSPHOHEXOSE MUTASE"/>
    <property type="match status" value="1"/>
</dbReference>
<dbReference type="Pfam" id="PF02878">
    <property type="entry name" value="PGM_PMM_I"/>
    <property type="match status" value="1"/>
</dbReference>
<dbReference type="Pfam" id="PF02879">
    <property type="entry name" value="PGM_PMM_II"/>
    <property type="match status" value="1"/>
</dbReference>
<dbReference type="Pfam" id="PF02880">
    <property type="entry name" value="PGM_PMM_III"/>
    <property type="match status" value="1"/>
</dbReference>
<dbReference type="Pfam" id="PF00408">
    <property type="entry name" value="PGM_PMM_IV"/>
    <property type="match status" value="1"/>
</dbReference>
<dbReference type="PRINTS" id="PR00509">
    <property type="entry name" value="PGMPMM"/>
</dbReference>
<dbReference type="SUPFAM" id="SSF55957">
    <property type="entry name" value="Phosphoglucomutase, C-terminal domain"/>
    <property type="match status" value="1"/>
</dbReference>
<dbReference type="SUPFAM" id="SSF53738">
    <property type="entry name" value="Phosphoglucomutase, first 3 domains"/>
    <property type="match status" value="3"/>
</dbReference>
<dbReference type="PROSITE" id="PS00710">
    <property type="entry name" value="PGM_PMM"/>
    <property type="match status" value="1"/>
</dbReference>
<protein>
    <recommendedName>
        <fullName evidence="1">Phosphoglucosamine mutase</fullName>
        <ecNumber evidence="1">5.4.2.10</ecNumber>
    </recommendedName>
</protein>
<feature type="chain" id="PRO_0000301357" description="Phosphoglucosamine mutase">
    <location>
        <begin position="1"/>
        <end position="447"/>
    </location>
</feature>
<feature type="active site" description="Phosphoserine intermediate" evidence="1">
    <location>
        <position position="102"/>
    </location>
</feature>
<feature type="binding site" description="via phosphate group" evidence="1">
    <location>
        <position position="102"/>
    </location>
    <ligand>
        <name>Mg(2+)</name>
        <dbReference type="ChEBI" id="CHEBI:18420"/>
    </ligand>
</feature>
<feature type="binding site" evidence="1">
    <location>
        <position position="241"/>
    </location>
    <ligand>
        <name>Mg(2+)</name>
        <dbReference type="ChEBI" id="CHEBI:18420"/>
    </ligand>
</feature>
<feature type="binding site" evidence="1">
    <location>
        <position position="243"/>
    </location>
    <ligand>
        <name>Mg(2+)</name>
        <dbReference type="ChEBI" id="CHEBI:18420"/>
    </ligand>
</feature>
<feature type="binding site" evidence="1">
    <location>
        <position position="245"/>
    </location>
    <ligand>
        <name>Mg(2+)</name>
        <dbReference type="ChEBI" id="CHEBI:18420"/>
    </ligand>
</feature>
<feature type="modified residue" description="Phosphoserine" evidence="1">
    <location>
        <position position="102"/>
    </location>
</feature>
<gene>
    <name evidence="1" type="primary">glmM</name>
    <name type="ordered locus">Patl_1573</name>
</gene>
<sequence length="447" mass="47479">MSDRKYFGTDGIRGKVGENLINPEFVMKLGWAAGKVLAGSGTNKVIIGKDTRISGYMLESALESGLSAAGINIGLLGPMPTPAIAYLTKTFRSEAGIVISASHNPYYDNGIKFFSADGSKLDDDIELAIEAEMDKPMQCVASDKLGKAVRIADAAGRYIEFCKGNFPSNLSLKGLKIVVDCAHGATYHIAPNVLSELGAEVIEIGTEPDGLNINRKVGATSMKAIVDSVIKHKADLGFALDGDGDRIMLVDHHGNVIDGDQIVYIIARDALKSGKLKGGVVGTVMSNLGLEVALSTLGVPFERSKVGDRYVLELLRQKGWSIGGEGSGHVLNLDAASTGDGIVAGLQVLAAMLNANMTLNELSRGMTKFPQTLINVRFNEGDTPLDAQDVKNSVLEAESALGERGRVLLRKSGTEPLIRVMVEANDATDSRKWAEHIADAVRKATGQ</sequence>
<evidence type="ECO:0000255" key="1">
    <source>
        <dbReference type="HAMAP-Rule" id="MF_01554"/>
    </source>
</evidence>
<comment type="function">
    <text evidence="1">Catalyzes the conversion of glucosamine-6-phosphate to glucosamine-1-phosphate.</text>
</comment>
<comment type="catalytic activity">
    <reaction evidence="1">
        <text>alpha-D-glucosamine 1-phosphate = D-glucosamine 6-phosphate</text>
        <dbReference type="Rhea" id="RHEA:23424"/>
        <dbReference type="ChEBI" id="CHEBI:58516"/>
        <dbReference type="ChEBI" id="CHEBI:58725"/>
        <dbReference type="EC" id="5.4.2.10"/>
    </reaction>
</comment>
<comment type="cofactor">
    <cofactor evidence="1">
        <name>Mg(2+)</name>
        <dbReference type="ChEBI" id="CHEBI:18420"/>
    </cofactor>
    <text evidence="1">Binds 1 Mg(2+) ion per subunit.</text>
</comment>
<comment type="PTM">
    <text evidence="1">Activated by phosphorylation.</text>
</comment>
<comment type="similarity">
    <text evidence="1">Belongs to the phosphohexose mutase family.</text>
</comment>
<organism>
    <name type="scientific">Pseudoalteromonas atlantica (strain T6c / ATCC BAA-1087)</name>
    <dbReference type="NCBI Taxonomy" id="3042615"/>
    <lineage>
        <taxon>Bacteria</taxon>
        <taxon>Pseudomonadati</taxon>
        <taxon>Pseudomonadota</taxon>
        <taxon>Gammaproteobacteria</taxon>
        <taxon>Alteromonadales</taxon>
        <taxon>Alteromonadaceae</taxon>
        <taxon>Paraglaciecola</taxon>
    </lineage>
</organism>
<keyword id="KW-0413">Isomerase</keyword>
<keyword id="KW-0460">Magnesium</keyword>
<keyword id="KW-0479">Metal-binding</keyword>
<keyword id="KW-0597">Phosphoprotein</keyword>
<proteinExistence type="inferred from homology"/>
<accession>Q15VJ3</accession>
<name>GLMM_PSEA6</name>